<gene>
    <name type="primary">luxA</name>
</gene>
<comment type="function">
    <text evidence="1">Light-emitting reaction in luminous bacteria.</text>
</comment>
<comment type="catalytic activity">
    <reaction evidence="1">
        <text>a long-chain fatty aldehyde + FMNH2 + O2 = a long-chain fatty acid + hnu + FMN + H2O + 2 H(+)</text>
        <dbReference type="Rhea" id="RHEA:17181"/>
        <dbReference type="ChEBI" id="CHEBI:15377"/>
        <dbReference type="ChEBI" id="CHEBI:15378"/>
        <dbReference type="ChEBI" id="CHEBI:15379"/>
        <dbReference type="ChEBI" id="CHEBI:17176"/>
        <dbReference type="ChEBI" id="CHEBI:30212"/>
        <dbReference type="ChEBI" id="CHEBI:57560"/>
        <dbReference type="ChEBI" id="CHEBI:57618"/>
        <dbReference type="ChEBI" id="CHEBI:58210"/>
        <dbReference type="EC" id="1.14.14.3"/>
    </reaction>
</comment>
<comment type="subunit">
    <text>Heterodimer of an alpha and a beta chain.</text>
</comment>
<comment type="miscellaneous">
    <text>The synthesis of this protein is regulated by a complex control mechanism that has been termed autoinduction.</text>
</comment>
<comment type="similarity">
    <text evidence="2">Belongs to the bacterial luciferase oxidoreductase family.</text>
</comment>
<name>LUXA2_PHOLU</name>
<sequence length="362" mass="41401">MKFGNFLLTYQPPQFSQTEVMKWLVKLGRISEECGFDTVWLLEHHFTEFGLLGNPYVAAAYLLGATKKLNVGTAAIVLPTAHPVRQLEEVNLLDQMSKGRFRFGICRGLYNKDFRVFGTDMNNSRALMECWYKLIRNGMTEGYMEADNEHIKFHKVKVLPTAYSQGGAPIYVVAESASTTEWAAQHGLPMILSWIINTNDKKAQIELYNEVAQEYGHDIHNIDHCLSYITSVDHDSMKAKEICRNFLGHWYDSYVNATTIFDDSDKTKGYDFNKGQWRDFVLKGHKNTNRRVDYSYEINPVGTPQECIDIIQTDIDATGISNICCGFEANGTVDEIISSMKLFQSDVMPFLKEKQQFSYYIS</sequence>
<proteinExistence type="evidence at protein level"/>
<keyword id="KW-0285">Flavoprotein</keyword>
<keyword id="KW-0288">FMN</keyword>
<keyword id="KW-0455">Luminescence</keyword>
<keyword id="KW-0503">Monooxygenase</keyword>
<keyword id="KW-0560">Oxidoreductase</keyword>
<keyword id="KW-0599">Photoprotein</keyword>
<dbReference type="EC" id="1.14.14.3" evidence="1"/>
<dbReference type="EMBL" id="M62917">
    <property type="protein sequence ID" value="AAA63565.1"/>
    <property type="molecule type" value="Genomic_DNA"/>
</dbReference>
<dbReference type="PIR" id="C38448">
    <property type="entry name" value="C38448"/>
</dbReference>
<dbReference type="SMR" id="P23146"/>
<dbReference type="GO" id="GO:0005829">
    <property type="term" value="C:cytosol"/>
    <property type="evidence" value="ECO:0007669"/>
    <property type="project" value="TreeGrafter"/>
</dbReference>
<dbReference type="GO" id="GO:0047646">
    <property type="term" value="F:alkanal monooxygenase (FMN-linked) activity"/>
    <property type="evidence" value="ECO:0007669"/>
    <property type="project" value="UniProtKB-EC"/>
</dbReference>
<dbReference type="GO" id="GO:0008218">
    <property type="term" value="P:bioluminescence"/>
    <property type="evidence" value="ECO:0007669"/>
    <property type="project" value="UniProtKB-KW"/>
</dbReference>
<dbReference type="CDD" id="cd01096">
    <property type="entry name" value="Alkanal_monooxygenase"/>
    <property type="match status" value="1"/>
</dbReference>
<dbReference type="Gene3D" id="3.20.20.30">
    <property type="entry name" value="Luciferase-like domain"/>
    <property type="match status" value="1"/>
</dbReference>
<dbReference type="InterPro" id="IPR033924">
    <property type="entry name" value="Alkanal_monooxygenase"/>
</dbReference>
<dbReference type="InterPro" id="IPR050766">
    <property type="entry name" value="Bact_Lucif_Oxidored"/>
</dbReference>
<dbReference type="InterPro" id="IPR018235">
    <property type="entry name" value="Bacterial_luciferase_CS"/>
</dbReference>
<dbReference type="InterPro" id="IPR011251">
    <property type="entry name" value="Luciferase-like_dom"/>
</dbReference>
<dbReference type="InterPro" id="IPR036661">
    <property type="entry name" value="Luciferase-like_sf"/>
</dbReference>
<dbReference type="InterPro" id="IPR002103">
    <property type="entry name" value="Luciferase_bac/NFP"/>
</dbReference>
<dbReference type="PANTHER" id="PTHR30137:SF8">
    <property type="entry name" value="BLR5498 PROTEIN"/>
    <property type="match status" value="1"/>
</dbReference>
<dbReference type="PANTHER" id="PTHR30137">
    <property type="entry name" value="LUCIFERASE-LIKE MONOOXYGENASE"/>
    <property type="match status" value="1"/>
</dbReference>
<dbReference type="Pfam" id="PF00296">
    <property type="entry name" value="Bac_luciferase"/>
    <property type="match status" value="1"/>
</dbReference>
<dbReference type="PRINTS" id="PR00089">
    <property type="entry name" value="LUCIFERASE"/>
</dbReference>
<dbReference type="SUPFAM" id="SSF51679">
    <property type="entry name" value="Bacterial luciferase-like"/>
    <property type="match status" value="1"/>
</dbReference>
<dbReference type="PROSITE" id="PS00494">
    <property type="entry name" value="BACTERIAL_LUCIFERASE"/>
    <property type="match status" value="1"/>
</dbReference>
<protein>
    <recommendedName>
        <fullName>Alkanal monooxygenase alpha chain</fullName>
        <ecNumber evidence="1">1.14.14.3</ecNumber>
    </recommendedName>
    <alternativeName>
        <fullName>Bacterial luciferase alpha chain</fullName>
    </alternativeName>
</protein>
<reference key="1">
    <citation type="journal article" date="1991" name="J. Bacteriol.">
        <title>Cloning and nucleotide sequences of lux genes and characterization of luciferase of Xenorhabdus luminescens from a human wound.</title>
        <authorList>
            <person name="Xi L."/>
            <person name="Cho K.W."/>
            <person name="Tu S.C."/>
        </authorList>
    </citation>
    <scope>NUCLEOTIDE SEQUENCE [GENOMIC DNA]</scope>
    <scope>FUNCTION</scope>
    <scope>CATALYTIC ACTIVITY</scope>
    <source>
        <strain>Hw</strain>
    </source>
</reference>
<organism>
    <name type="scientific">Photorhabdus luminescens</name>
    <name type="common">Xenorhabdus luminescens</name>
    <dbReference type="NCBI Taxonomy" id="29488"/>
    <lineage>
        <taxon>Bacteria</taxon>
        <taxon>Pseudomonadati</taxon>
        <taxon>Pseudomonadota</taxon>
        <taxon>Gammaproteobacteria</taxon>
        <taxon>Enterobacterales</taxon>
        <taxon>Morganellaceae</taxon>
        <taxon>Photorhabdus</taxon>
    </lineage>
</organism>
<accession>P23146</accession>
<feature type="chain" id="PRO_0000220168" description="Alkanal monooxygenase alpha chain">
    <location>
        <begin position="1"/>
        <end position="362"/>
    </location>
</feature>
<evidence type="ECO:0000269" key="1">
    <source>
    </source>
</evidence>
<evidence type="ECO:0000305" key="2"/>